<accession>Q5N553</accession>
<protein>
    <recommendedName>
        <fullName evidence="1">Photosystem II reaction center protein J</fullName>
        <shortName evidence="1">PSII-J</shortName>
    </recommendedName>
</protein>
<keyword id="KW-0472">Membrane</keyword>
<keyword id="KW-0602">Photosynthesis</keyword>
<keyword id="KW-0604">Photosystem II</keyword>
<keyword id="KW-0674">Reaction center</keyword>
<keyword id="KW-0793">Thylakoid</keyword>
<keyword id="KW-0812">Transmembrane</keyword>
<keyword id="KW-1133">Transmembrane helix</keyword>
<organism>
    <name type="scientific">Synechococcus sp. (strain ATCC 27144 / PCC 6301 / SAUG 1402/1)</name>
    <name type="common">Anacystis nidulans</name>
    <dbReference type="NCBI Taxonomy" id="269084"/>
    <lineage>
        <taxon>Bacteria</taxon>
        <taxon>Bacillati</taxon>
        <taxon>Cyanobacteriota</taxon>
        <taxon>Cyanophyceae</taxon>
        <taxon>Synechococcales</taxon>
        <taxon>Synechococcaceae</taxon>
        <taxon>Synechococcus</taxon>
    </lineage>
</organism>
<proteinExistence type="inferred from homology"/>
<comment type="function">
    <text evidence="1">One of the components of the core complex of photosystem II (PSII). PSII is a light-driven water:plastoquinone oxidoreductase that uses light energy to abstract electrons from H(2)O, generating O(2) and a proton gradient subsequently used for ATP formation. It consists of a core antenna complex that captures photons, and an electron transfer chain that converts photonic excitation into a charge separation.</text>
</comment>
<comment type="subunit">
    <text evidence="1">PSII is composed of 1 copy each of membrane proteins PsbA, PsbB, PsbC, PsbD, PsbE, PsbF, PsbH, PsbI, PsbJ, PsbK, PsbL, PsbM, PsbT, PsbX, PsbY, PsbZ, Psb30/Ycf12, peripheral proteins PsbO, CyanoQ (PsbQ), PsbU, PsbV and a large number of cofactors. It forms dimeric complexes.</text>
</comment>
<comment type="subcellular location">
    <subcellularLocation>
        <location evidence="1">Cellular thylakoid membrane</location>
        <topology evidence="1">Single-pass membrane protein</topology>
    </subcellularLocation>
</comment>
<comment type="similarity">
    <text evidence="1">Belongs to the PsbJ family.</text>
</comment>
<sequence>MAGGGRIPLWIVATVAGTGALVVVGLFFYGAYAGLGSSL</sequence>
<dbReference type="EMBL" id="AP008231">
    <property type="protein sequence ID" value="BAD78566.1"/>
    <property type="molecule type" value="Genomic_DNA"/>
</dbReference>
<dbReference type="RefSeq" id="WP_011242688.1">
    <property type="nucleotide sequence ID" value="NC_006576.1"/>
</dbReference>
<dbReference type="SMR" id="Q5N553"/>
<dbReference type="KEGG" id="syc:syc0376_d"/>
<dbReference type="eggNOG" id="ENOG5033ABP">
    <property type="taxonomic scope" value="Bacteria"/>
</dbReference>
<dbReference type="Proteomes" id="UP000001175">
    <property type="component" value="Chromosome"/>
</dbReference>
<dbReference type="GO" id="GO:0009539">
    <property type="term" value="C:photosystem II reaction center"/>
    <property type="evidence" value="ECO:0007669"/>
    <property type="project" value="InterPro"/>
</dbReference>
<dbReference type="GO" id="GO:0031676">
    <property type="term" value="C:plasma membrane-derived thylakoid membrane"/>
    <property type="evidence" value="ECO:0007669"/>
    <property type="project" value="UniProtKB-SubCell"/>
</dbReference>
<dbReference type="GO" id="GO:0015979">
    <property type="term" value="P:photosynthesis"/>
    <property type="evidence" value="ECO:0007669"/>
    <property type="project" value="UniProtKB-UniRule"/>
</dbReference>
<dbReference type="Gene3D" id="6.10.250.2070">
    <property type="match status" value="1"/>
</dbReference>
<dbReference type="HAMAP" id="MF_01305">
    <property type="entry name" value="PSII_PsbJ"/>
    <property type="match status" value="1"/>
</dbReference>
<dbReference type="InterPro" id="IPR002682">
    <property type="entry name" value="PSII_PsbJ"/>
</dbReference>
<dbReference type="InterPro" id="IPR037267">
    <property type="entry name" value="PSII_PsbJ_sf"/>
</dbReference>
<dbReference type="NCBIfam" id="NF002722">
    <property type="entry name" value="PRK02565.1"/>
    <property type="match status" value="1"/>
</dbReference>
<dbReference type="PANTHER" id="PTHR34812">
    <property type="entry name" value="PHOTOSYSTEM II REACTION CENTER PROTEIN J"/>
    <property type="match status" value="1"/>
</dbReference>
<dbReference type="PANTHER" id="PTHR34812:SF3">
    <property type="entry name" value="PHOTOSYSTEM II REACTION CENTER PROTEIN J"/>
    <property type="match status" value="1"/>
</dbReference>
<dbReference type="Pfam" id="PF01788">
    <property type="entry name" value="PsbJ"/>
    <property type="match status" value="1"/>
</dbReference>
<dbReference type="SUPFAM" id="SSF161021">
    <property type="entry name" value="Photosystem II reaction center protein J, PsbJ"/>
    <property type="match status" value="1"/>
</dbReference>
<reference key="1">
    <citation type="journal article" date="2007" name="Photosyn. Res.">
        <title>Complete nucleotide sequence of the freshwater unicellular cyanobacterium Synechococcus elongatus PCC 6301 chromosome: gene content and organization.</title>
        <authorList>
            <person name="Sugita C."/>
            <person name="Ogata K."/>
            <person name="Shikata M."/>
            <person name="Jikuya H."/>
            <person name="Takano J."/>
            <person name="Furumichi M."/>
            <person name="Kanehisa M."/>
            <person name="Omata T."/>
            <person name="Sugiura M."/>
            <person name="Sugita M."/>
        </authorList>
    </citation>
    <scope>NUCLEOTIDE SEQUENCE [LARGE SCALE GENOMIC DNA]</scope>
    <source>
        <strain>ATCC 27144 / PCC 6301 / SAUG 1402/1</strain>
    </source>
</reference>
<evidence type="ECO:0000255" key="1">
    <source>
        <dbReference type="HAMAP-Rule" id="MF_01305"/>
    </source>
</evidence>
<name>PSBJ_SYNP6</name>
<gene>
    <name evidence="1" type="primary">psbJ</name>
    <name type="ordered locus">syc0376_d</name>
</gene>
<feature type="chain" id="PRO_0000216625" description="Photosystem II reaction center protein J">
    <location>
        <begin position="1"/>
        <end position="39"/>
    </location>
</feature>
<feature type="transmembrane region" description="Helical" evidence="1">
    <location>
        <begin position="7"/>
        <end position="27"/>
    </location>
</feature>